<name>DCDB_METTH</name>
<gene>
    <name evidence="1" type="primary">dcd</name>
    <name type="ordered locus">MTH_1847</name>
</gene>
<dbReference type="EC" id="3.5.4.30" evidence="1"/>
<dbReference type="EMBL" id="AE000666">
    <property type="protein sequence ID" value="AAB86313.1"/>
    <property type="status" value="ALT_INIT"/>
    <property type="molecule type" value="Genomic_DNA"/>
</dbReference>
<dbReference type="PIR" id="A69114">
    <property type="entry name" value="A69114"/>
</dbReference>
<dbReference type="RefSeq" id="WP_048061156.1">
    <property type="nucleotide sequence ID" value="NC_000916.1"/>
</dbReference>
<dbReference type="SMR" id="O27875"/>
<dbReference type="FunCoup" id="O27875">
    <property type="interactions" value="23"/>
</dbReference>
<dbReference type="STRING" id="187420.MTH_1847"/>
<dbReference type="PaxDb" id="187420-MTH_1847"/>
<dbReference type="EnsemblBacteria" id="AAB86313">
    <property type="protein sequence ID" value="AAB86313"/>
    <property type="gene ID" value="MTH_1847"/>
</dbReference>
<dbReference type="GeneID" id="82298269"/>
<dbReference type="KEGG" id="mth:MTH_1847"/>
<dbReference type="PATRIC" id="fig|187420.15.peg.1801"/>
<dbReference type="HOGENOM" id="CLU_087476_2_1_2"/>
<dbReference type="InParanoid" id="O27875"/>
<dbReference type="UniPathway" id="UPA00610">
    <property type="reaction ID" value="UER00667"/>
</dbReference>
<dbReference type="Proteomes" id="UP000005223">
    <property type="component" value="Chromosome"/>
</dbReference>
<dbReference type="GO" id="GO:0033973">
    <property type="term" value="F:dCTP deaminase (dUMP-forming) activity"/>
    <property type="evidence" value="ECO:0007669"/>
    <property type="project" value="UniProtKB-UniRule"/>
</dbReference>
<dbReference type="GO" id="GO:0008829">
    <property type="term" value="F:dCTP deaminase activity"/>
    <property type="evidence" value="ECO:0007669"/>
    <property type="project" value="InterPro"/>
</dbReference>
<dbReference type="GO" id="GO:0000166">
    <property type="term" value="F:nucleotide binding"/>
    <property type="evidence" value="ECO:0007669"/>
    <property type="project" value="UniProtKB-KW"/>
</dbReference>
<dbReference type="GO" id="GO:0006226">
    <property type="term" value="P:dUMP biosynthetic process"/>
    <property type="evidence" value="ECO:0007669"/>
    <property type="project" value="UniProtKB-UniRule"/>
</dbReference>
<dbReference type="GO" id="GO:0006229">
    <property type="term" value="P:dUTP biosynthetic process"/>
    <property type="evidence" value="ECO:0007669"/>
    <property type="project" value="InterPro"/>
</dbReference>
<dbReference type="GO" id="GO:0015949">
    <property type="term" value="P:nucleobase-containing small molecule interconversion"/>
    <property type="evidence" value="ECO:0007669"/>
    <property type="project" value="TreeGrafter"/>
</dbReference>
<dbReference type="CDD" id="cd07557">
    <property type="entry name" value="trimeric_dUTPase"/>
    <property type="match status" value="1"/>
</dbReference>
<dbReference type="FunFam" id="2.70.40.10:FF:000005">
    <property type="entry name" value="dCTP deaminase, dUMP-forming"/>
    <property type="match status" value="1"/>
</dbReference>
<dbReference type="Gene3D" id="2.70.40.10">
    <property type="match status" value="1"/>
</dbReference>
<dbReference type="HAMAP" id="MF_00146">
    <property type="entry name" value="dCTP_deaminase"/>
    <property type="match status" value="1"/>
</dbReference>
<dbReference type="InterPro" id="IPR011962">
    <property type="entry name" value="dCTP_deaminase"/>
</dbReference>
<dbReference type="InterPro" id="IPR036157">
    <property type="entry name" value="dUTPase-like_sf"/>
</dbReference>
<dbReference type="InterPro" id="IPR033704">
    <property type="entry name" value="dUTPase_trimeric"/>
</dbReference>
<dbReference type="NCBIfam" id="TIGR02274">
    <property type="entry name" value="dCTP_deam"/>
    <property type="match status" value="1"/>
</dbReference>
<dbReference type="PANTHER" id="PTHR42680">
    <property type="entry name" value="DCTP DEAMINASE"/>
    <property type="match status" value="1"/>
</dbReference>
<dbReference type="PANTHER" id="PTHR42680:SF3">
    <property type="entry name" value="DCTP DEAMINASE"/>
    <property type="match status" value="1"/>
</dbReference>
<dbReference type="Pfam" id="PF22769">
    <property type="entry name" value="DCD"/>
    <property type="match status" value="1"/>
</dbReference>
<dbReference type="SUPFAM" id="SSF51283">
    <property type="entry name" value="dUTPase-like"/>
    <property type="match status" value="1"/>
</dbReference>
<protein>
    <recommendedName>
        <fullName evidence="1">dCTP deaminase, dUMP-forming</fullName>
        <ecNumber evidence="1">3.5.4.30</ecNumber>
    </recommendedName>
    <alternativeName>
        <fullName evidence="1">Bifunctional dCTP deaminase:dUTPase</fullName>
    </alternativeName>
    <alternativeName>
        <fullName evidence="1">DCD-DUT</fullName>
    </alternativeName>
</protein>
<organism>
    <name type="scientific">Methanothermobacter thermautotrophicus (strain ATCC 29096 / DSM 1053 / JCM 10044 / NBRC 100330 / Delta H)</name>
    <name type="common">Methanobacterium thermoautotrophicum</name>
    <dbReference type="NCBI Taxonomy" id="187420"/>
    <lineage>
        <taxon>Archaea</taxon>
        <taxon>Methanobacteriati</taxon>
        <taxon>Methanobacteriota</taxon>
        <taxon>Methanomada group</taxon>
        <taxon>Methanobacteria</taxon>
        <taxon>Methanobacteriales</taxon>
        <taxon>Methanobacteriaceae</taxon>
        <taxon>Methanothermobacter</taxon>
    </lineage>
</organism>
<sequence length="197" mass="22427">MAILSDRDIKRYIEEGLITIDPLDDPERQIQPSSVDLRIGNEFKGFRVIRKPCIDPKDPSDIESYMETFHVEDGPFIIHPGEFALATTHEYIALPEDLVARVEGRSSIGRLGITMHVTAGYIDPGFHGRITLEISNIGKMPVALYPRQRVCQIVFETMTSPAERPYGHPSRDSKYIGQTRPQTSRIKDDYEIRNSRL</sequence>
<proteinExistence type="inferred from homology"/>
<comment type="function">
    <text evidence="1">Bifunctional enzyme that catalyzes both the deamination of dCTP to dUTP and the hydrolysis of dUTP to dUMP without releasing the toxic dUTP intermediate.</text>
</comment>
<comment type="catalytic activity">
    <reaction evidence="1">
        <text>dCTP + 2 H2O = dUMP + NH4(+) + diphosphate</text>
        <dbReference type="Rhea" id="RHEA:19205"/>
        <dbReference type="ChEBI" id="CHEBI:15377"/>
        <dbReference type="ChEBI" id="CHEBI:28938"/>
        <dbReference type="ChEBI" id="CHEBI:33019"/>
        <dbReference type="ChEBI" id="CHEBI:61481"/>
        <dbReference type="ChEBI" id="CHEBI:246422"/>
        <dbReference type="EC" id="3.5.4.30"/>
    </reaction>
</comment>
<comment type="pathway">
    <text evidence="1">Pyrimidine metabolism; dUMP biosynthesis; dUMP from dCTP: step 1/1.</text>
</comment>
<comment type="subunit">
    <text evidence="1">Homotrimer.</text>
</comment>
<comment type="similarity">
    <text evidence="1">Belongs to the dCTP deaminase family.</text>
</comment>
<comment type="sequence caution" evidence="3">
    <conflict type="erroneous initiation">
        <sequence resource="EMBL-CDS" id="AAB86313"/>
    </conflict>
</comment>
<evidence type="ECO:0000255" key="1">
    <source>
        <dbReference type="HAMAP-Rule" id="MF_00146"/>
    </source>
</evidence>
<evidence type="ECO:0000256" key="2">
    <source>
        <dbReference type="SAM" id="MobiDB-lite"/>
    </source>
</evidence>
<evidence type="ECO:0000305" key="3"/>
<accession>O27875</accession>
<feature type="chain" id="PRO_0000156032" description="dCTP deaminase, dUMP-forming">
    <location>
        <begin position="1"/>
        <end position="197"/>
    </location>
</feature>
<feature type="region of interest" description="Disordered" evidence="2">
    <location>
        <begin position="161"/>
        <end position="183"/>
    </location>
</feature>
<feature type="compositionally biased region" description="Basic and acidic residues" evidence="2">
    <location>
        <begin position="165"/>
        <end position="174"/>
    </location>
</feature>
<feature type="active site" description="Proton donor/acceptor" evidence="1">
    <location>
        <position position="133"/>
    </location>
</feature>
<feature type="binding site" evidence="1">
    <location>
        <begin position="105"/>
        <end position="110"/>
    </location>
    <ligand>
        <name>dCTP</name>
        <dbReference type="ChEBI" id="CHEBI:61481"/>
    </ligand>
</feature>
<feature type="binding site" evidence="1">
    <location>
        <position position="123"/>
    </location>
    <ligand>
        <name>dCTP</name>
        <dbReference type="ChEBI" id="CHEBI:61481"/>
    </ligand>
</feature>
<feature type="binding site" evidence="1">
    <location>
        <begin position="131"/>
        <end position="133"/>
    </location>
    <ligand>
        <name>dCTP</name>
        <dbReference type="ChEBI" id="CHEBI:61481"/>
    </ligand>
</feature>
<feature type="binding site" evidence="1">
    <location>
        <position position="152"/>
    </location>
    <ligand>
        <name>dCTP</name>
        <dbReference type="ChEBI" id="CHEBI:61481"/>
    </ligand>
</feature>
<feature type="binding site" evidence="1">
    <location>
        <position position="166"/>
    </location>
    <ligand>
        <name>dCTP</name>
        <dbReference type="ChEBI" id="CHEBI:61481"/>
    </ligand>
</feature>
<feature type="binding site" evidence="1">
    <location>
        <position position="174"/>
    </location>
    <ligand>
        <name>dCTP</name>
        <dbReference type="ChEBI" id="CHEBI:61481"/>
    </ligand>
</feature>
<feature type="binding site" evidence="1">
    <location>
        <position position="178"/>
    </location>
    <ligand>
        <name>dCTP</name>
        <dbReference type="ChEBI" id="CHEBI:61481"/>
    </ligand>
</feature>
<feature type="site" description="Important for bifunctional activity" evidence="1">
    <location>
        <begin position="120"/>
        <end position="121"/>
    </location>
</feature>
<keyword id="KW-0378">Hydrolase</keyword>
<keyword id="KW-0546">Nucleotide metabolism</keyword>
<keyword id="KW-0547">Nucleotide-binding</keyword>
<keyword id="KW-1185">Reference proteome</keyword>
<reference key="1">
    <citation type="journal article" date="1997" name="J. Bacteriol.">
        <title>Complete genome sequence of Methanobacterium thermoautotrophicum deltaH: functional analysis and comparative genomics.</title>
        <authorList>
            <person name="Smith D.R."/>
            <person name="Doucette-Stamm L.A."/>
            <person name="Deloughery C."/>
            <person name="Lee H.-M."/>
            <person name="Dubois J."/>
            <person name="Aldredge T."/>
            <person name="Bashirzadeh R."/>
            <person name="Blakely D."/>
            <person name="Cook R."/>
            <person name="Gilbert K."/>
            <person name="Harrison D."/>
            <person name="Hoang L."/>
            <person name="Keagle P."/>
            <person name="Lumm W."/>
            <person name="Pothier B."/>
            <person name="Qiu D."/>
            <person name="Spadafora R."/>
            <person name="Vicare R."/>
            <person name="Wang Y."/>
            <person name="Wierzbowski J."/>
            <person name="Gibson R."/>
            <person name="Jiwani N."/>
            <person name="Caruso A."/>
            <person name="Bush D."/>
            <person name="Safer H."/>
            <person name="Patwell D."/>
            <person name="Prabhakar S."/>
            <person name="McDougall S."/>
            <person name="Shimer G."/>
            <person name="Goyal A."/>
            <person name="Pietrovski S."/>
            <person name="Church G.M."/>
            <person name="Daniels C.J."/>
            <person name="Mao J.-I."/>
            <person name="Rice P."/>
            <person name="Noelling J."/>
            <person name="Reeve J.N."/>
        </authorList>
    </citation>
    <scope>NUCLEOTIDE SEQUENCE [LARGE SCALE GENOMIC DNA]</scope>
    <source>
        <strain>ATCC 29096 / DSM 1053 / JCM 10044 / NBRC 100330 / Delta H</strain>
    </source>
</reference>